<proteinExistence type="inferred from homology"/>
<gene>
    <name evidence="1" type="primary">msbA</name>
    <name type="ordered locus">NMB1919</name>
</gene>
<accession>Q9JXR3</accession>
<name>MSBA_NEIMB</name>
<reference key="1">
    <citation type="journal article" date="2000" name="Science">
        <title>Complete genome sequence of Neisseria meningitidis serogroup B strain MC58.</title>
        <authorList>
            <person name="Tettelin H."/>
            <person name="Saunders N.J."/>
            <person name="Heidelberg J.F."/>
            <person name="Jeffries A.C."/>
            <person name="Nelson K.E."/>
            <person name="Eisen J.A."/>
            <person name="Ketchum K.A."/>
            <person name="Hood D.W."/>
            <person name="Peden J.F."/>
            <person name="Dodson R.J."/>
            <person name="Nelson W.C."/>
            <person name="Gwinn M.L."/>
            <person name="DeBoy R.T."/>
            <person name="Peterson J.D."/>
            <person name="Hickey E.K."/>
            <person name="Haft D.H."/>
            <person name="Salzberg S.L."/>
            <person name="White O."/>
            <person name="Fleischmann R.D."/>
            <person name="Dougherty B.A."/>
            <person name="Mason T.M."/>
            <person name="Ciecko A."/>
            <person name="Parksey D.S."/>
            <person name="Blair E."/>
            <person name="Cittone H."/>
            <person name="Clark E.B."/>
            <person name="Cotton M.D."/>
            <person name="Utterback T.R."/>
            <person name="Khouri H.M."/>
            <person name="Qin H."/>
            <person name="Vamathevan J.J."/>
            <person name="Gill J."/>
            <person name="Scarlato V."/>
            <person name="Masignani V."/>
            <person name="Pizza M."/>
            <person name="Grandi G."/>
            <person name="Sun L."/>
            <person name="Smith H.O."/>
            <person name="Fraser C.M."/>
            <person name="Moxon E.R."/>
            <person name="Rappuoli R."/>
            <person name="Venter J.C."/>
        </authorList>
    </citation>
    <scope>NUCLEOTIDE SEQUENCE [LARGE SCALE GENOMIC DNA]</scope>
    <source>
        <strain>ATCC BAA-335 / MC58</strain>
    </source>
</reference>
<dbReference type="EC" id="7.5.2.6" evidence="1"/>
<dbReference type="EMBL" id="AE002098">
    <property type="protein sequence ID" value="AAF42249.1"/>
    <property type="molecule type" value="Genomic_DNA"/>
</dbReference>
<dbReference type="PIR" id="C81026">
    <property type="entry name" value="C81026"/>
</dbReference>
<dbReference type="RefSeq" id="NP_274913.1">
    <property type="nucleotide sequence ID" value="NC_003112.2"/>
</dbReference>
<dbReference type="RefSeq" id="WP_002238384.1">
    <property type="nucleotide sequence ID" value="NC_003112.2"/>
</dbReference>
<dbReference type="SMR" id="Q9JXR3"/>
<dbReference type="FunCoup" id="Q9JXR3">
    <property type="interactions" value="354"/>
</dbReference>
<dbReference type="STRING" id="122586.NMB1919"/>
<dbReference type="PaxDb" id="122586-NMB1919"/>
<dbReference type="KEGG" id="nme:NMB1919"/>
<dbReference type="PATRIC" id="fig|122586.8.peg.2447"/>
<dbReference type="HOGENOM" id="CLU_000604_84_3_4"/>
<dbReference type="InParanoid" id="Q9JXR3"/>
<dbReference type="OrthoDB" id="8554730at2"/>
<dbReference type="Proteomes" id="UP000000425">
    <property type="component" value="Chromosome"/>
</dbReference>
<dbReference type="GO" id="GO:0005886">
    <property type="term" value="C:plasma membrane"/>
    <property type="evidence" value="ECO:0000318"/>
    <property type="project" value="GO_Central"/>
</dbReference>
<dbReference type="GO" id="GO:0140359">
    <property type="term" value="F:ABC-type transporter activity"/>
    <property type="evidence" value="ECO:0007669"/>
    <property type="project" value="InterPro"/>
</dbReference>
<dbReference type="GO" id="GO:0005524">
    <property type="term" value="F:ATP binding"/>
    <property type="evidence" value="ECO:0007669"/>
    <property type="project" value="UniProtKB-KW"/>
</dbReference>
<dbReference type="GO" id="GO:0016887">
    <property type="term" value="F:ATP hydrolysis activity"/>
    <property type="evidence" value="ECO:0007669"/>
    <property type="project" value="InterPro"/>
</dbReference>
<dbReference type="GO" id="GO:0034040">
    <property type="term" value="F:ATPase-coupled lipid transmembrane transporter activity"/>
    <property type="evidence" value="ECO:0007669"/>
    <property type="project" value="InterPro"/>
</dbReference>
<dbReference type="GO" id="GO:0042626">
    <property type="term" value="F:ATPase-coupled transmembrane transporter activity"/>
    <property type="evidence" value="ECO:0000318"/>
    <property type="project" value="GO_Central"/>
</dbReference>
<dbReference type="CDD" id="cd18552">
    <property type="entry name" value="ABC_6TM_MsbA_like"/>
    <property type="match status" value="1"/>
</dbReference>
<dbReference type="CDD" id="cd03251">
    <property type="entry name" value="ABCC_MsbA"/>
    <property type="match status" value="1"/>
</dbReference>
<dbReference type="FunFam" id="3.40.50.300:FF:001001">
    <property type="entry name" value="Multidrug ABC transporter ATP-binding protein"/>
    <property type="match status" value="1"/>
</dbReference>
<dbReference type="Gene3D" id="1.20.1560.10">
    <property type="entry name" value="ABC transporter type 1, transmembrane domain"/>
    <property type="match status" value="1"/>
</dbReference>
<dbReference type="Gene3D" id="3.40.50.300">
    <property type="entry name" value="P-loop containing nucleotide triphosphate hydrolases"/>
    <property type="match status" value="1"/>
</dbReference>
<dbReference type="InterPro" id="IPR003593">
    <property type="entry name" value="AAA+_ATPase"/>
</dbReference>
<dbReference type="InterPro" id="IPR011527">
    <property type="entry name" value="ABC1_TM_dom"/>
</dbReference>
<dbReference type="InterPro" id="IPR036640">
    <property type="entry name" value="ABC1_TM_sf"/>
</dbReference>
<dbReference type="InterPro" id="IPR003439">
    <property type="entry name" value="ABC_transporter-like_ATP-bd"/>
</dbReference>
<dbReference type="InterPro" id="IPR017871">
    <property type="entry name" value="ABC_transporter-like_CS"/>
</dbReference>
<dbReference type="InterPro" id="IPR011917">
    <property type="entry name" value="ABC_transpr_lipidA"/>
</dbReference>
<dbReference type="InterPro" id="IPR027417">
    <property type="entry name" value="P-loop_NTPase"/>
</dbReference>
<dbReference type="InterPro" id="IPR039421">
    <property type="entry name" value="Type_1_exporter"/>
</dbReference>
<dbReference type="NCBIfam" id="TIGR02203">
    <property type="entry name" value="MsbA_lipidA"/>
    <property type="match status" value="1"/>
</dbReference>
<dbReference type="PANTHER" id="PTHR43394:SF1">
    <property type="entry name" value="ATP-BINDING CASSETTE SUB-FAMILY B MEMBER 10, MITOCHONDRIAL"/>
    <property type="match status" value="1"/>
</dbReference>
<dbReference type="PANTHER" id="PTHR43394">
    <property type="entry name" value="ATP-DEPENDENT PERMEASE MDL1, MITOCHONDRIAL"/>
    <property type="match status" value="1"/>
</dbReference>
<dbReference type="Pfam" id="PF00664">
    <property type="entry name" value="ABC_membrane"/>
    <property type="match status" value="1"/>
</dbReference>
<dbReference type="Pfam" id="PF00005">
    <property type="entry name" value="ABC_tran"/>
    <property type="match status" value="1"/>
</dbReference>
<dbReference type="SMART" id="SM00382">
    <property type="entry name" value="AAA"/>
    <property type="match status" value="1"/>
</dbReference>
<dbReference type="SUPFAM" id="SSF90123">
    <property type="entry name" value="ABC transporter transmembrane region"/>
    <property type="match status" value="1"/>
</dbReference>
<dbReference type="SUPFAM" id="SSF52540">
    <property type="entry name" value="P-loop containing nucleoside triphosphate hydrolases"/>
    <property type="match status" value="1"/>
</dbReference>
<dbReference type="PROSITE" id="PS50929">
    <property type="entry name" value="ABC_TM1F"/>
    <property type="match status" value="1"/>
</dbReference>
<dbReference type="PROSITE" id="PS00211">
    <property type="entry name" value="ABC_TRANSPORTER_1"/>
    <property type="match status" value="1"/>
</dbReference>
<dbReference type="PROSITE" id="PS50893">
    <property type="entry name" value="ABC_TRANSPORTER_2"/>
    <property type="match status" value="1"/>
</dbReference>
<dbReference type="PROSITE" id="PS51239">
    <property type="entry name" value="MSBA"/>
    <property type="match status" value="1"/>
</dbReference>
<organism>
    <name type="scientific">Neisseria meningitidis serogroup B (strain ATCC BAA-335 / MC58)</name>
    <dbReference type="NCBI Taxonomy" id="122586"/>
    <lineage>
        <taxon>Bacteria</taxon>
        <taxon>Pseudomonadati</taxon>
        <taxon>Pseudomonadota</taxon>
        <taxon>Betaproteobacteria</taxon>
        <taxon>Neisseriales</taxon>
        <taxon>Neisseriaceae</taxon>
        <taxon>Neisseria</taxon>
    </lineage>
</organism>
<protein>
    <recommendedName>
        <fullName evidence="1">ATP-dependent lipid A-core flippase</fullName>
        <ecNumber evidence="1">7.5.2.6</ecNumber>
    </recommendedName>
    <alternativeName>
        <fullName evidence="1">Lipid A export ATP-binding/permease protein MsbA</fullName>
    </alternativeName>
</protein>
<evidence type="ECO:0000255" key="1">
    <source>
        <dbReference type="HAMAP-Rule" id="MF_01703"/>
    </source>
</evidence>
<comment type="function">
    <text evidence="1">Involved in lipopolysaccharide (LPS) biosynthesis. Translocates lipid A-core from the inner to the outer leaflet of the inner membrane. Transmembrane domains (TMD) form a pore in the inner membrane and the ATP-binding domain (NBD) is responsible for energy generation.</text>
</comment>
<comment type="catalytic activity">
    <reaction evidence="1">
        <text>ATP + H2O + lipid A-core oligosaccharideSide 1 = ADP + phosphate + lipid A-core oligosaccharideSide 2.</text>
        <dbReference type="EC" id="7.5.2.6"/>
    </reaction>
</comment>
<comment type="subunit">
    <text evidence="1">Homodimer.</text>
</comment>
<comment type="subcellular location">
    <subcellularLocation>
        <location evidence="1">Cell inner membrane</location>
        <topology evidence="1">Multi-pass membrane protein</topology>
    </subcellularLocation>
</comment>
<comment type="domain">
    <text evidence="1">In MsbA the ATP-binding domain (NBD) and the transmembrane domain (TMD) are fused.</text>
</comment>
<comment type="similarity">
    <text evidence="1">Belongs to the ABC transporter superfamily. Lipid exporter (TC 3.A.1.106) family.</text>
</comment>
<sequence>MIEKLTFGLFKKEDARSFMRLMAYVRPYKIRIVAALIAIFGVAATESYLAAFIAPLINHGFSAPAAPPELSAAAGIISTLQNWREQFTYMVWGTENKIWTVPLFLIILVVIRGICRFTSTYLMTWVSVMTISKIRKDMFAKMLTLSSRYHQETPSGTVLMNMLNLTEQSVSNASDIFTVLTRDTMIVTGLTIVLLYLNWQLSLIVVLMFPLLSLLSRYYRDRLKHVISDSQKSIGTMNNVIAETHQGHRVVKLFNGQAQAANRFDAVNRTIVRLSKKITQATAAHSPFSELIASIALAVVIFIALWQSQNGYTTIGEFMAFIVAMLQMYAPIKSLANISIPMQTMFLAADGVCAFLDTPPEQDKGTLAPQRVEGRISFRNVDVEYRSDGIKALDNFNLDIRQGERVALVGRSGSGKSTVVNLLPRFVEPSAGNICIDGIDIADIKLDCLRAQFALVSQDVFLFDDTLFENVRYSRPDAGEAEVLFALQTANLQSLIDSSPLGLHQPIGSNGSNLSGGQRQRVAIARAILKDAPILLLDEATSALDNESERLVQQALERLMENRTGIIVAHRLTTIEGADRIIVMDDGKIIEQGTHEQLMSQNGYYTMLRNISNKDAAVRTA</sequence>
<feature type="chain" id="PRO_0000092590" description="ATP-dependent lipid A-core flippase">
    <location>
        <begin position="1"/>
        <end position="621"/>
    </location>
</feature>
<feature type="transmembrane region" description="Helical" evidence="1">
    <location>
        <begin position="32"/>
        <end position="52"/>
    </location>
</feature>
<feature type="transmembrane region" description="Helical" evidence="1">
    <location>
        <begin position="91"/>
        <end position="111"/>
    </location>
</feature>
<feature type="transmembrane region" description="Helical" evidence="1">
    <location>
        <begin position="192"/>
        <end position="212"/>
    </location>
</feature>
<feature type="transmembrane region" description="Helical" evidence="1">
    <location>
        <begin position="286"/>
        <end position="306"/>
    </location>
</feature>
<feature type="transmembrane region" description="Helical" evidence="1">
    <location>
        <begin position="312"/>
        <end position="332"/>
    </location>
</feature>
<feature type="domain" description="ABC transmembrane type-1" evidence="1">
    <location>
        <begin position="33"/>
        <end position="344"/>
    </location>
</feature>
<feature type="domain" description="ABC transporter" evidence="1">
    <location>
        <begin position="378"/>
        <end position="611"/>
    </location>
</feature>
<feature type="binding site" evidence="1">
    <location>
        <begin position="410"/>
        <end position="417"/>
    </location>
    <ligand>
        <name>ATP</name>
        <dbReference type="ChEBI" id="CHEBI:30616"/>
    </ligand>
</feature>
<keyword id="KW-0067">ATP-binding</keyword>
<keyword id="KW-0997">Cell inner membrane</keyword>
<keyword id="KW-1003">Cell membrane</keyword>
<keyword id="KW-0445">Lipid transport</keyword>
<keyword id="KW-0472">Membrane</keyword>
<keyword id="KW-0547">Nucleotide-binding</keyword>
<keyword id="KW-1185">Reference proteome</keyword>
<keyword id="KW-1278">Translocase</keyword>
<keyword id="KW-0812">Transmembrane</keyword>
<keyword id="KW-1133">Transmembrane helix</keyword>
<keyword id="KW-0813">Transport</keyword>